<proteinExistence type="evidence at protein level"/>
<sequence>SCYDLCQPCGPTPLANSCNEPCVRQCQDSRVVIQPSPVVVTLPGPILSSFPQNTAVGSTSAAVGSILSEQGVPISSGGFSLSGLGGRSYSRYLPC</sequence>
<reference key="1">
    <citation type="journal article" date="1986" name="Biochim. Biophys. Acta">
        <title>The primary structure of feather keratins from duck (Anas platyrhynchos) and pigeon (Columba livia).</title>
        <authorList>
            <person name="Arai K.M."/>
            <person name="Takahashi R."/>
            <person name="Yokote Y."/>
            <person name="Akahane K."/>
        </authorList>
    </citation>
    <scope>PROTEIN SEQUENCE</scope>
    <scope>ACETYLATION AT SER-1</scope>
    <source>
        <tissue>Feather</tissue>
    </source>
</reference>
<comment type="subunit">
    <text>The avian keratins (F-ker, S-ker, C-ker and B-ker) are a complex mixture of very similar polypeptides.</text>
</comment>
<comment type="similarity">
    <text evidence="2">Belongs to the avian keratin family.</text>
</comment>
<accession>P07521</accession>
<keyword id="KW-0007">Acetylation</keyword>
<keyword id="KW-0903">Direct protein sequencing</keyword>
<keyword id="KW-0416">Keratin</keyword>
<organism>
    <name type="scientific">Columba livia</name>
    <name type="common">Rock dove</name>
    <dbReference type="NCBI Taxonomy" id="8932"/>
    <lineage>
        <taxon>Eukaryota</taxon>
        <taxon>Metazoa</taxon>
        <taxon>Chordata</taxon>
        <taxon>Craniata</taxon>
        <taxon>Vertebrata</taxon>
        <taxon>Euteleostomi</taxon>
        <taxon>Archelosauria</taxon>
        <taxon>Archosauria</taxon>
        <taxon>Dinosauria</taxon>
        <taxon>Saurischia</taxon>
        <taxon>Theropoda</taxon>
        <taxon>Coelurosauria</taxon>
        <taxon>Aves</taxon>
        <taxon>Neognathae</taxon>
        <taxon>Neoaves</taxon>
        <taxon>Columbimorphae</taxon>
        <taxon>Columbiformes</taxon>
        <taxon>Columbidae</taxon>
        <taxon>Columba</taxon>
    </lineage>
</organism>
<name>KRFT_COLLI</name>
<dbReference type="PIR" id="B24506">
    <property type="entry name" value="KRPYF4"/>
</dbReference>
<dbReference type="eggNOG" id="ENOG502TDE8">
    <property type="taxonomic scope" value="Eukaryota"/>
</dbReference>
<dbReference type="GO" id="GO:0005882">
    <property type="term" value="C:intermediate filament"/>
    <property type="evidence" value="ECO:0007669"/>
    <property type="project" value="UniProtKB-KW"/>
</dbReference>
<dbReference type="GO" id="GO:0005200">
    <property type="term" value="F:structural constituent of cytoskeleton"/>
    <property type="evidence" value="ECO:0007669"/>
    <property type="project" value="InterPro"/>
</dbReference>
<dbReference type="InterPro" id="IPR003461">
    <property type="entry name" value="Keratin"/>
</dbReference>
<dbReference type="PANTHER" id="PTHR31203">
    <property type="entry name" value="BETA-KERATIN-RELATED PROTEIN-RELATED"/>
    <property type="match status" value="1"/>
</dbReference>
<dbReference type="PANTHER" id="PTHR31203:SF1">
    <property type="entry name" value="BETA-KERATIN-RELATED PROTEIN-RELATED"/>
    <property type="match status" value="1"/>
</dbReference>
<dbReference type="Pfam" id="PF02422">
    <property type="entry name" value="Keratin"/>
    <property type="match status" value="1"/>
</dbReference>
<feature type="chain" id="PRO_0000097001" description="Feather keratin B-4">
    <location>
        <begin position="1"/>
        <end position="95"/>
    </location>
</feature>
<feature type="modified residue" description="N-acetylserine" evidence="1">
    <location>
        <position position="1"/>
    </location>
</feature>
<evidence type="ECO:0000269" key="1">
    <source ref="1"/>
</evidence>
<evidence type="ECO:0000305" key="2"/>
<protein>
    <recommendedName>
        <fullName>Feather keratin B-4</fullName>
        <shortName>F-ker</shortName>
    </recommendedName>
</protein>